<dbReference type="EC" id="4.2.1.20" evidence="1"/>
<dbReference type="EMBL" id="CP001196">
    <property type="protein sequence ID" value="ACI91623.1"/>
    <property type="molecule type" value="Genomic_DNA"/>
</dbReference>
<dbReference type="EMBL" id="CP002826">
    <property type="protein sequence ID" value="AEI04790.1"/>
    <property type="molecule type" value="Genomic_DNA"/>
</dbReference>
<dbReference type="RefSeq" id="WP_012561654.1">
    <property type="nucleotide sequence ID" value="NC_015684.1"/>
</dbReference>
<dbReference type="SMR" id="B6JCP3"/>
<dbReference type="STRING" id="504832.OCA5_c00560"/>
<dbReference type="KEGG" id="oca:OCAR_4478"/>
<dbReference type="KEGG" id="ocg:OCA5_c00560"/>
<dbReference type="PATRIC" id="fig|504832.7.peg.59"/>
<dbReference type="eggNOG" id="COG0159">
    <property type="taxonomic scope" value="Bacteria"/>
</dbReference>
<dbReference type="HOGENOM" id="CLU_016734_0_0_5"/>
<dbReference type="OrthoDB" id="9804578at2"/>
<dbReference type="UniPathway" id="UPA00035">
    <property type="reaction ID" value="UER00044"/>
</dbReference>
<dbReference type="Proteomes" id="UP000007730">
    <property type="component" value="Chromosome"/>
</dbReference>
<dbReference type="GO" id="GO:0005829">
    <property type="term" value="C:cytosol"/>
    <property type="evidence" value="ECO:0007669"/>
    <property type="project" value="TreeGrafter"/>
</dbReference>
<dbReference type="GO" id="GO:0004834">
    <property type="term" value="F:tryptophan synthase activity"/>
    <property type="evidence" value="ECO:0007669"/>
    <property type="project" value="UniProtKB-UniRule"/>
</dbReference>
<dbReference type="CDD" id="cd04724">
    <property type="entry name" value="Tryptophan_synthase_alpha"/>
    <property type="match status" value="1"/>
</dbReference>
<dbReference type="FunFam" id="3.20.20.70:FF:000037">
    <property type="entry name" value="Tryptophan synthase alpha chain"/>
    <property type="match status" value="1"/>
</dbReference>
<dbReference type="Gene3D" id="3.20.20.70">
    <property type="entry name" value="Aldolase class I"/>
    <property type="match status" value="1"/>
</dbReference>
<dbReference type="HAMAP" id="MF_00131">
    <property type="entry name" value="Trp_synth_alpha"/>
    <property type="match status" value="1"/>
</dbReference>
<dbReference type="InterPro" id="IPR013785">
    <property type="entry name" value="Aldolase_TIM"/>
</dbReference>
<dbReference type="InterPro" id="IPR011060">
    <property type="entry name" value="RibuloseP-bd_barrel"/>
</dbReference>
<dbReference type="InterPro" id="IPR018204">
    <property type="entry name" value="Trp_synthase_alpha_AS"/>
</dbReference>
<dbReference type="InterPro" id="IPR002028">
    <property type="entry name" value="Trp_synthase_suA"/>
</dbReference>
<dbReference type="NCBIfam" id="TIGR00262">
    <property type="entry name" value="trpA"/>
    <property type="match status" value="1"/>
</dbReference>
<dbReference type="PANTHER" id="PTHR43406:SF1">
    <property type="entry name" value="TRYPTOPHAN SYNTHASE ALPHA CHAIN, CHLOROPLASTIC"/>
    <property type="match status" value="1"/>
</dbReference>
<dbReference type="PANTHER" id="PTHR43406">
    <property type="entry name" value="TRYPTOPHAN SYNTHASE, ALPHA CHAIN"/>
    <property type="match status" value="1"/>
</dbReference>
<dbReference type="Pfam" id="PF00290">
    <property type="entry name" value="Trp_syntA"/>
    <property type="match status" value="1"/>
</dbReference>
<dbReference type="SUPFAM" id="SSF51366">
    <property type="entry name" value="Ribulose-phoshate binding barrel"/>
    <property type="match status" value="1"/>
</dbReference>
<dbReference type="PROSITE" id="PS00167">
    <property type="entry name" value="TRP_SYNTHASE_ALPHA"/>
    <property type="match status" value="1"/>
</dbReference>
<sequence>MTTRLDTRFADLKKEGRAALVTFLMCGDPDLETSLAIMKALPKAGADVIEIGMPFTDPMADGPAIQAAGLRALKAGTTLKKTLDVVRNFRKGEAATPVVLMGYYNPIFIYGVDRFLVDAKEAGVDGLIVVDLPPEEDEELCLPALKAGVNFIRLATPTTDDKRLPAVLANTSGFVYYVSITGITGAAAADDKQVGEAVARIKRHTQLPVCVGFGIRTPEAAARIARHCEGAVVGSALVDALRGTLDAEGKAGPNTVSAVTDLVAALAQGVHGVKPVSA</sequence>
<proteinExistence type="inferred from homology"/>
<organism>
    <name type="scientific">Afipia carboxidovorans (strain ATCC 49405 / DSM 1227 / KCTC 32145 / OM5)</name>
    <name type="common">Oligotropha carboxidovorans</name>
    <dbReference type="NCBI Taxonomy" id="504832"/>
    <lineage>
        <taxon>Bacteria</taxon>
        <taxon>Pseudomonadati</taxon>
        <taxon>Pseudomonadota</taxon>
        <taxon>Alphaproteobacteria</taxon>
        <taxon>Hyphomicrobiales</taxon>
        <taxon>Nitrobacteraceae</taxon>
        <taxon>Afipia</taxon>
    </lineage>
</organism>
<gene>
    <name evidence="1" type="primary">trpA</name>
    <name type="ordered locus">OCAR_4478</name>
    <name type="ordered locus">OCA5_c00560</name>
</gene>
<protein>
    <recommendedName>
        <fullName evidence="1">Tryptophan synthase alpha chain</fullName>
        <ecNumber evidence="1">4.2.1.20</ecNumber>
    </recommendedName>
</protein>
<evidence type="ECO:0000255" key="1">
    <source>
        <dbReference type="HAMAP-Rule" id="MF_00131"/>
    </source>
</evidence>
<name>TRPA_AFIC5</name>
<comment type="function">
    <text evidence="1">The alpha subunit is responsible for the aldol cleavage of indoleglycerol phosphate to indole and glyceraldehyde 3-phosphate.</text>
</comment>
<comment type="catalytic activity">
    <reaction evidence="1">
        <text>(1S,2R)-1-C-(indol-3-yl)glycerol 3-phosphate + L-serine = D-glyceraldehyde 3-phosphate + L-tryptophan + H2O</text>
        <dbReference type="Rhea" id="RHEA:10532"/>
        <dbReference type="ChEBI" id="CHEBI:15377"/>
        <dbReference type="ChEBI" id="CHEBI:33384"/>
        <dbReference type="ChEBI" id="CHEBI:57912"/>
        <dbReference type="ChEBI" id="CHEBI:58866"/>
        <dbReference type="ChEBI" id="CHEBI:59776"/>
        <dbReference type="EC" id="4.2.1.20"/>
    </reaction>
</comment>
<comment type="pathway">
    <text evidence="1">Amino-acid biosynthesis; L-tryptophan biosynthesis; L-tryptophan from chorismate: step 5/5.</text>
</comment>
<comment type="subunit">
    <text evidence="1">Tetramer of two alpha and two beta chains.</text>
</comment>
<comment type="similarity">
    <text evidence="1">Belongs to the TrpA family.</text>
</comment>
<feature type="chain" id="PRO_1000095734" description="Tryptophan synthase alpha chain">
    <location>
        <begin position="1"/>
        <end position="278"/>
    </location>
</feature>
<feature type="active site" description="Proton acceptor" evidence="1">
    <location>
        <position position="50"/>
    </location>
</feature>
<feature type="active site" description="Proton acceptor" evidence="1">
    <location>
        <position position="61"/>
    </location>
</feature>
<keyword id="KW-0028">Amino-acid biosynthesis</keyword>
<keyword id="KW-0057">Aromatic amino acid biosynthesis</keyword>
<keyword id="KW-0456">Lyase</keyword>
<keyword id="KW-1185">Reference proteome</keyword>
<keyword id="KW-0822">Tryptophan biosynthesis</keyword>
<reference key="1">
    <citation type="journal article" date="2008" name="J. Bacteriol.">
        <title>Genome sequence of the chemolithoautotrophic bacterium Oligotropha carboxidovorans OM5T.</title>
        <authorList>
            <person name="Paul D."/>
            <person name="Bridges S."/>
            <person name="Burgess S.C."/>
            <person name="Dandass Y."/>
            <person name="Lawrence M.L."/>
        </authorList>
    </citation>
    <scope>NUCLEOTIDE SEQUENCE [LARGE SCALE GENOMIC DNA]</scope>
    <source>
        <strain>ATCC 49405 / DSM 1227 / KCTC 32145 / OM5</strain>
    </source>
</reference>
<reference key="2">
    <citation type="journal article" date="2011" name="J. Bacteriol.">
        <title>Complete genome sequences of the chemolithoautotrophic Oligotropha carboxidovorans strains OM4 and OM5.</title>
        <authorList>
            <person name="Volland S."/>
            <person name="Rachinger M."/>
            <person name="Strittmatter A."/>
            <person name="Daniel R."/>
            <person name="Gottschalk G."/>
            <person name="Meyer O."/>
        </authorList>
    </citation>
    <scope>NUCLEOTIDE SEQUENCE [LARGE SCALE GENOMIC DNA]</scope>
    <source>
        <strain>ATCC 49405 / DSM 1227 / KCTC 32145 / OM5</strain>
    </source>
</reference>
<accession>B6JCP3</accession>
<accession>F8C091</accession>